<sequence>MTPLSSPLSQYWQTVVERLPEGFTETSLSAQAKSVLTFSDFALDSVIAHPEWLAELESASPQADEWRHYAGWLQEALAGVCDDASLMRELRFFRRRIMVRIAWAQTLSLVDDETILQQLSHLAETLIVGARDWLYAACCREWGTPCNPQGVPQPLLILGMGKLGGGELNFSSDIDLIFAWPEHGETRGGRRELDNAQFFTRLGQRLIKALDQPTMDGFVYRVDMRLRPFGDSGPLVLSFAALEDYYQEQGRDWERYAMVKARLMGDNDDAWSRELRAMLRPFVFRRYIDFSVIQSLRNMKGMIAREVRRRGLKDNIKLGAGGIREIEFIVQVFQLIRGGREPSLQSRSLLPTLDAIAALHLLPENDVAQLRVAYLFLRRLENLLQSINDEQTQTLPADDLNRARLAWGMKAENWPQLVGELTDHMANVRRVFNELIGDDEADTPQEEERSEPWREVWQDALQEDDSTPVLAHLADEDRRQVLTLIADFRKELDKRPIGPRGRQVLDQLMPHLLADVCSREDAVVTLSRITPLLAGIVTRTTYLELLSEFPGALKHLIMLCAASPMIASQLARYPLLLDELLDPGTLYQPTATDAYRDELRQYLLRVPEEDEEQQLEALRQFKQAQLLRIAAADIAGTLPVMKVSDHLTWLAEAMIDAVVQQAWTQMVARYGQPAHLDERQGRGFAVVGYGKLGGWELGYSSDLDLIFLHDCPMDVMTNGEREIDGRQFYLRLAQRIMHLFSTRTSSGILYEVDARLRPSGAAGMLVTSADAFADYQQHEAWTWEHQALVRARVVYGDPQLTSQFDAVRRTIMTTARDGKTLQTEVREMREKMRAHLGNKHRDRFDIKADEGGITDIEFIAQYLVLRYAHEKPKLTRWSDNVRILELLAQNGIMDDHEAQALTVAYTTLRDELHHLALQELPGHVAQTCFSKERALVQASWRKWLVAV</sequence>
<organism>
    <name type="scientific">Salmonella heidelberg (strain SL476)</name>
    <dbReference type="NCBI Taxonomy" id="454169"/>
    <lineage>
        <taxon>Bacteria</taxon>
        <taxon>Pseudomonadati</taxon>
        <taxon>Pseudomonadota</taxon>
        <taxon>Gammaproteobacteria</taxon>
        <taxon>Enterobacterales</taxon>
        <taxon>Enterobacteriaceae</taxon>
        <taxon>Salmonella</taxon>
    </lineage>
</organism>
<keyword id="KW-0067">ATP-binding</keyword>
<keyword id="KW-0460">Magnesium</keyword>
<keyword id="KW-0511">Multifunctional enzyme</keyword>
<keyword id="KW-0547">Nucleotide-binding</keyword>
<keyword id="KW-0548">Nucleotidyltransferase</keyword>
<keyword id="KW-0808">Transferase</keyword>
<protein>
    <recommendedName>
        <fullName evidence="1">Bifunctional glutamine synthetase adenylyltransferase/adenylyl-removing enzyme</fullName>
    </recommendedName>
    <alternativeName>
        <fullName evidence="1">ATP:glutamine synthetase adenylyltransferase</fullName>
    </alternativeName>
    <alternativeName>
        <fullName evidence="1">ATase</fullName>
    </alternativeName>
    <domain>
        <recommendedName>
            <fullName evidence="1">Glutamine synthetase adenylyl-L-tyrosine phosphorylase</fullName>
            <ecNumber evidence="1">2.7.7.89</ecNumber>
        </recommendedName>
        <alternativeName>
            <fullName evidence="1">Adenylyl removase</fullName>
            <shortName evidence="1">AR</shortName>
            <shortName evidence="1">AT-N</shortName>
        </alternativeName>
    </domain>
    <domain>
        <recommendedName>
            <fullName evidence="1">Glutamine synthetase adenylyl transferase</fullName>
            <ecNumber evidence="1">2.7.7.42</ecNumber>
        </recommendedName>
        <alternativeName>
            <fullName evidence="1">Adenylyl transferase</fullName>
            <shortName evidence="1">AT</shortName>
            <shortName evidence="1">AT-C</shortName>
        </alternativeName>
    </domain>
</protein>
<comment type="function">
    <text evidence="1">Involved in the regulation of glutamine synthetase GlnA, a key enzyme in the process to assimilate ammonia. When cellular nitrogen levels are high, the C-terminal adenylyl transferase (AT) inactivates GlnA by covalent transfer of an adenylyl group from ATP to specific tyrosine residue of GlnA, thus reducing its activity. Conversely, when nitrogen levels are low, the N-terminal adenylyl removase (AR) activates GlnA by removing the adenylyl group by phosphorolysis, increasing its activity. The regulatory region of GlnE binds the signal transduction protein PII (GlnB) which indicates the nitrogen status of the cell.</text>
</comment>
<comment type="catalytic activity">
    <reaction evidence="1">
        <text>[glutamine synthetase]-O(4)-(5'-adenylyl)-L-tyrosine + phosphate = [glutamine synthetase]-L-tyrosine + ADP</text>
        <dbReference type="Rhea" id="RHEA:43716"/>
        <dbReference type="Rhea" id="RHEA-COMP:10660"/>
        <dbReference type="Rhea" id="RHEA-COMP:10661"/>
        <dbReference type="ChEBI" id="CHEBI:43474"/>
        <dbReference type="ChEBI" id="CHEBI:46858"/>
        <dbReference type="ChEBI" id="CHEBI:83624"/>
        <dbReference type="ChEBI" id="CHEBI:456216"/>
        <dbReference type="EC" id="2.7.7.89"/>
    </reaction>
</comment>
<comment type="catalytic activity">
    <reaction evidence="1">
        <text>[glutamine synthetase]-L-tyrosine + ATP = [glutamine synthetase]-O(4)-(5'-adenylyl)-L-tyrosine + diphosphate</text>
        <dbReference type="Rhea" id="RHEA:18589"/>
        <dbReference type="Rhea" id="RHEA-COMP:10660"/>
        <dbReference type="Rhea" id="RHEA-COMP:10661"/>
        <dbReference type="ChEBI" id="CHEBI:30616"/>
        <dbReference type="ChEBI" id="CHEBI:33019"/>
        <dbReference type="ChEBI" id="CHEBI:46858"/>
        <dbReference type="ChEBI" id="CHEBI:83624"/>
        <dbReference type="EC" id="2.7.7.42"/>
    </reaction>
</comment>
<comment type="cofactor">
    <cofactor evidence="1">
        <name>Mg(2+)</name>
        <dbReference type="ChEBI" id="CHEBI:18420"/>
    </cofactor>
</comment>
<comment type="similarity">
    <text evidence="1">Belongs to the GlnE family.</text>
</comment>
<gene>
    <name evidence="1" type="primary">glnE</name>
    <name type="ordered locus">SeHA_C3455</name>
</gene>
<proteinExistence type="inferred from homology"/>
<reference key="1">
    <citation type="journal article" date="2011" name="J. Bacteriol.">
        <title>Comparative genomics of 28 Salmonella enterica isolates: evidence for CRISPR-mediated adaptive sublineage evolution.</title>
        <authorList>
            <person name="Fricke W.F."/>
            <person name="Mammel M.K."/>
            <person name="McDermott P.F."/>
            <person name="Tartera C."/>
            <person name="White D.G."/>
            <person name="Leclerc J.E."/>
            <person name="Ravel J."/>
            <person name="Cebula T.A."/>
        </authorList>
    </citation>
    <scope>NUCLEOTIDE SEQUENCE [LARGE SCALE GENOMIC DNA]</scope>
    <source>
        <strain>SL476</strain>
    </source>
</reference>
<feature type="chain" id="PRO_1000133914" description="Bifunctional glutamine synthetase adenylyltransferase/adenylyl-removing enzyme">
    <location>
        <begin position="1"/>
        <end position="947"/>
    </location>
</feature>
<feature type="region of interest" description="Adenylyl removase" evidence="1">
    <location>
        <begin position="1"/>
        <end position="440"/>
    </location>
</feature>
<feature type="region of interest" description="Adenylyl transferase" evidence="1">
    <location>
        <begin position="450"/>
        <end position="947"/>
    </location>
</feature>
<evidence type="ECO:0000255" key="1">
    <source>
        <dbReference type="HAMAP-Rule" id="MF_00802"/>
    </source>
</evidence>
<accession>B4TI52</accession>
<name>GLNE_SALHS</name>
<dbReference type="EC" id="2.7.7.89" evidence="1"/>
<dbReference type="EC" id="2.7.7.42" evidence="1"/>
<dbReference type="EMBL" id="CP001120">
    <property type="protein sequence ID" value="ACF66089.1"/>
    <property type="molecule type" value="Genomic_DNA"/>
</dbReference>
<dbReference type="RefSeq" id="WP_000188295.1">
    <property type="nucleotide sequence ID" value="NC_011083.1"/>
</dbReference>
<dbReference type="SMR" id="B4TI52"/>
<dbReference type="KEGG" id="seh:SeHA_C3455"/>
<dbReference type="HOGENOM" id="CLU_006233_0_1_6"/>
<dbReference type="Proteomes" id="UP000001866">
    <property type="component" value="Chromosome"/>
</dbReference>
<dbReference type="GO" id="GO:0005829">
    <property type="term" value="C:cytosol"/>
    <property type="evidence" value="ECO:0007669"/>
    <property type="project" value="TreeGrafter"/>
</dbReference>
<dbReference type="GO" id="GO:0008882">
    <property type="term" value="F:[glutamate-ammonia-ligase] adenylyltransferase activity"/>
    <property type="evidence" value="ECO:0007669"/>
    <property type="project" value="UniProtKB-UniRule"/>
</dbReference>
<dbReference type="GO" id="GO:0047388">
    <property type="term" value="F:[glutamine synthetase]-adenylyl-L-tyrosine phosphorylase activity"/>
    <property type="evidence" value="ECO:0007669"/>
    <property type="project" value="UniProtKB-EC"/>
</dbReference>
<dbReference type="GO" id="GO:0005524">
    <property type="term" value="F:ATP binding"/>
    <property type="evidence" value="ECO:0007669"/>
    <property type="project" value="UniProtKB-UniRule"/>
</dbReference>
<dbReference type="GO" id="GO:0000287">
    <property type="term" value="F:magnesium ion binding"/>
    <property type="evidence" value="ECO:0007669"/>
    <property type="project" value="UniProtKB-UniRule"/>
</dbReference>
<dbReference type="GO" id="GO:0000820">
    <property type="term" value="P:regulation of glutamine family amino acid metabolic process"/>
    <property type="evidence" value="ECO:0007669"/>
    <property type="project" value="UniProtKB-UniRule"/>
</dbReference>
<dbReference type="CDD" id="cd05401">
    <property type="entry name" value="NT_GlnE_GlnD_like"/>
    <property type="match status" value="2"/>
</dbReference>
<dbReference type="FunFam" id="1.10.4050.10:FF:000001">
    <property type="entry name" value="Bifunctional glutamine synthetase adenylyltransferase/adenylyl-removing enzyme"/>
    <property type="match status" value="1"/>
</dbReference>
<dbReference type="FunFam" id="1.20.120.1510:FF:000001">
    <property type="entry name" value="Bifunctional glutamine synthetase adenylyltransferase/adenylyl-removing enzyme"/>
    <property type="match status" value="1"/>
</dbReference>
<dbReference type="FunFam" id="1.20.120.330:FF:000005">
    <property type="entry name" value="Bifunctional glutamine synthetase adenylyltransferase/adenylyl-removing enzyme"/>
    <property type="match status" value="1"/>
</dbReference>
<dbReference type="FunFam" id="1.20.120.330:FF:000008">
    <property type="entry name" value="Bifunctional glutamine synthetase adenylyltransferase/adenylyl-removing enzyme"/>
    <property type="match status" value="1"/>
</dbReference>
<dbReference type="FunFam" id="3.30.460.10:FF:000009">
    <property type="entry name" value="Bifunctional glutamine synthetase adenylyltransferase/adenylyl-removing enzyme"/>
    <property type="match status" value="1"/>
</dbReference>
<dbReference type="FunFam" id="3.30.460.10:FF:000014">
    <property type="entry name" value="Bifunctional glutamine synthetase adenylyltransferase/adenylyl-removing enzyme"/>
    <property type="match status" value="1"/>
</dbReference>
<dbReference type="Gene3D" id="1.20.120.1510">
    <property type="match status" value="1"/>
</dbReference>
<dbReference type="Gene3D" id="3.30.460.10">
    <property type="entry name" value="Beta Polymerase, domain 2"/>
    <property type="match status" value="2"/>
</dbReference>
<dbReference type="Gene3D" id="1.10.4050.10">
    <property type="entry name" value="Glutamine synthase adenylyltransferase GlnE"/>
    <property type="match status" value="1"/>
</dbReference>
<dbReference type="Gene3D" id="1.20.120.330">
    <property type="entry name" value="Nucleotidyltransferases domain 2"/>
    <property type="match status" value="2"/>
</dbReference>
<dbReference type="HAMAP" id="MF_00802">
    <property type="entry name" value="GlnE"/>
    <property type="match status" value="1"/>
</dbReference>
<dbReference type="InterPro" id="IPR023057">
    <property type="entry name" value="GlnE"/>
</dbReference>
<dbReference type="InterPro" id="IPR005190">
    <property type="entry name" value="GlnE_rpt_dom"/>
</dbReference>
<dbReference type="InterPro" id="IPR043519">
    <property type="entry name" value="NT_sf"/>
</dbReference>
<dbReference type="InterPro" id="IPR013546">
    <property type="entry name" value="PII_UdlTrfase/GS_AdlTrfase"/>
</dbReference>
<dbReference type="NCBIfam" id="NF008292">
    <property type="entry name" value="PRK11072.1"/>
    <property type="match status" value="1"/>
</dbReference>
<dbReference type="PANTHER" id="PTHR30621:SF0">
    <property type="entry name" value="BIFUNCTIONAL GLUTAMINE SYNTHETASE ADENYLYLTRANSFERASE_ADENYLYL-REMOVING ENZYME"/>
    <property type="match status" value="1"/>
</dbReference>
<dbReference type="PANTHER" id="PTHR30621">
    <property type="entry name" value="GLUTAMINE SYNTHETASE ADENYLYLTRANSFERASE"/>
    <property type="match status" value="1"/>
</dbReference>
<dbReference type="Pfam" id="PF08335">
    <property type="entry name" value="GlnD_UR_UTase"/>
    <property type="match status" value="2"/>
</dbReference>
<dbReference type="Pfam" id="PF03710">
    <property type="entry name" value="GlnE"/>
    <property type="match status" value="2"/>
</dbReference>
<dbReference type="SUPFAM" id="SSF81301">
    <property type="entry name" value="Nucleotidyltransferase"/>
    <property type="match status" value="2"/>
</dbReference>
<dbReference type="SUPFAM" id="SSF81593">
    <property type="entry name" value="Nucleotidyltransferase substrate binding subunit/domain"/>
    <property type="match status" value="2"/>
</dbReference>